<proteinExistence type="evidence at protein level"/>
<reference key="1">
    <citation type="journal article" date="2004" name="Nat. Biotechnol.">
        <title>The genome sequence of the anaerobic, sulfate-reducing bacterium Desulfovibrio vulgaris Hildenborough.</title>
        <authorList>
            <person name="Heidelberg J.F."/>
            <person name="Seshadri R."/>
            <person name="Haveman S.A."/>
            <person name="Hemme C.L."/>
            <person name="Paulsen I.T."/>
            <person name="Kolonay J.F."/>
            <person name="Eisen J.A."/>
            <person name="Ward N.L."/>
            <person name="Methe B.A."/>
            <person name="Brinkac L.M."/>
            <person name="Daugherty S.C."/>
            <person name="DeBoy R.T."/>
            <person name="Dodson R.J."/>
            <person name="Durkin A.S."/>
            <person name="Madupu R."/>
            <person name="Nelson W.C."/>
            <person name="Sullivan S.A."/>
            <person name="Fouts D.E."/>
            <person name="Haft D.H."/>
            <person name="Selengut J."/>
            <person name="Peterson J.D."/>
            <person name="Davidsen T.M."/>
            <person name="Zafar N."/>
            <person name="Zhou L."/>
            <person name="Radune D."/>
            <person name="Dimitrov G."/>
            <person name="Hance M."/>
            <person name="Tran K."/>
            <person name="Khouri H.M."/>
            <person name="Gill J."/>
            <person name="Utterback T.R."/>
            <person name="Feldblyum T.V."/>
            <person name="Wall J.D."/>
            <person name="Voordouw G."/>
            <person name="Fraser C.M."/>
        </authorList>
    </citation>
    <scope>NUCLEOTIDE SEQUENCE [LARGE SCALE GENOMIC DNA]</scope>
    <source>
        <strain>ATCC 29579 / DSM 644 / CCUG 34227 / NCIMB 8303 / VKM B-1760 / Hildenborough</strain>
    </source>
</reference>
<reference key="2">
    <citation type="journal article" date="2011" name="Proc. Natl. Acad. Sci. U.S.A.">
        <title>Molecular hijacking of siroheme for the synthesis of heme and d1 heme.</title>
        <authorList>
            <person name="Bali S."/>
            <person name="Lawrence A.D."/>
            <person name="Lobo S.A."/>
            <person name="Saraiva L.M."/>
            <person name="Golding B.T."/>
            <person name="Palmer D.J."/>
            <person name="Howard M.J."/>
            <person name="Ferguson S.J."/>
            <person name="Warren M.J."/>
        </authorList>
    </citation>
    <scope>FUNCTION</scope>
    <scope>CATALYTIC ACTIVITY</scope>
    <scope>PATHWAY</scope>
</reference>
<dbReference type="EC" id="1.3.98.6" evidence="2"/>
<dbReference type="EMBL" id="AE017285">
    <property type="protein sequence ID" value="AAS95335.1"/>
    <property type="molecule type" value="Genomic_DNA"/>
</dbReference>
<dbReference type="RefSeq" id="YP_010076.1">
    <property type="nucleotide sequence ID" value="NC_002937.3"/>
</dbReference>
<dbReference type="SMR" id="Q72DS4"/>
<dbReference type="IntAct" id="Q72DS4">
    <property type="interactions" value="2"/>
</dbReference>
<dbReference type="STRING" id="882.DVU_0855"/>
<dbReference type="PaxDb" id="882-DVU_0855"/>
<dbReference type="EnsemblBacteria" id="AAS95335">
    <property type="protein sequence ID" value="AAS95335"/>
    <property type="gene ID" value="DVU_0855"/>
</dbReference>
<dbReference type="KEGG" id="dvu:DVU_0855"/>
<dbReference type="PATRIC" id="fig|882.5.peg.799"/>
<dbReference type="eggNOG" id="COG0535">
    <property type="taxonomic scope" value="Bacteria"/>
</dbReference>
<dbReference type="HOGENOM" id="CLU_009273_4_0_7"/>
<dbReference type="OrthoDB" id="9782387at2"/>
<dbReference type="PhylomeDB" id="Q72DS4"/>
<dbReference type="UniPathway" id="UPA00252"/>
<dbReference type="Proteomes" id="UP000002194">
    <property type="component" value="Chromosome"/>
</dbReference>
<dbReference type="GO" id="GO:0051539">
    <property type="term" value="F:4 iron, 4 sulfur cluster binding"/>
    <property type="evidence" value="ECO:0007669"/>
    <property type="project" value="UniProtKB-KW"/>
</dbReference>
<dbReference type="GO" id="GO:0046872">
    <property type="term" value="F:metal ion binding"/>
    <property type="evidence" value="ECO:0007669"/>
    <property type="project" value="UniProtKB-KW"/>
</dbReference>
<dbReference type="GO" id="GO:0016491">
    <property type="term" value="F:oxidoreductase activity"/>
    <property type="evidence" value="ECO:0007669"/>
    <property type="project" value="UniProtKB-KW"/>
</dbReference>
<dbReference type="GO" id="GO:0006783">
    <property type="term" value="P:heme biosynthetic process"/>
    <property type="evidence" value="ECO:0007669"/>
    <property type="project" value="UniProtKB-KW"/>
</dbReference>
<dbReference type="CDD" id="cd01335">
    <property type="entry name" value="Radical_SAM"/>
    <property type="match status" value="1"/>
</dbReference>
<dbReference type="CDD" id="cd21123">
    <property type="entry name" value="SPASM_MftC-like"/>
    <property type="match status" value="1"/>
</dbReference>
<dbReference type="Gene3D" id="3.20.20.70">
    <property type="entry name" value="Aldolase class I"/>
    <property type="match status" value="1"/>
</dbReference>
<dbReference type="InterPro" id="IPR023885">
    <property type="entry name" value="4Fe4S-binding_SPASM_dom"/>
</dbReference>
<dbReference type="InterPro" id="IPR013785">
    <property type="entry name" value="Aldolase_TIM"/>
</dbReference>
<dbReference type="InterPro" id="IPR034391">
    <property type="entry name" value="Cmo-like_SPASM_containing"/>
</dbReference>
<dbReference type="InterPro" id="IPR006638">
    <property type="entry name" value="Elp3/MiaA/NifB-like_rSAM"/>
</dbReference>
<dbReference type="InterPro" id="IPR017200">
    <property type="entry name" value="PqqE-like"/>
</dbReference>
<dbReference type="InterPro" id="IPR050377">
    <property type="entry name" value="Radical_SAM_PqqE_MftC-like"/>
</dbReference>
<dbReference type="InterPro" id="IPR007197">
    <property type="entry name" value="rSAM"/>
</dbReference>
<dbReference type="InterPro" id="IPR030896">
    <property type="entry name" value="rSAM_AhbD_hemeb"/>
</dbReference>
<dbReference type="NCBIfam" id="TIGR04545">
    <property type="entry name" value="rSAM_ahbD_hemeb"/>
    <property type="match status" value="1"/>
</dbReference>
<dbReference type="NCBIfam" id="TIGR04085">
    <property type="entry name" value="rSAM_more_4Fe4S"/>
    <property type="match status" value="1"/>
</dbReference>
<dbReference type="PANTHER" id="PTHR11228">
    <property type="entry name" value="RADICAL SAM DOMAIN PROTEIN"/>
    <property type="match status" value="1"/>
</dbReference>
<dbReference type="PANTHER" id="PTHR11228:SF34">
    <property type="entry name" value="TUNGSTEN-CONTAINING ALDEHYDE FERREDOXIN OXIDOREDUCTASE COFACTOR MODIFYING PROTEIN"/>
    <property type="match status" value="1"/>
</dbReference>
<dbReference type="Pfam" id="PF13353">
    <property type="entry name" value="Fer4_12"/>
    <property type="match status" value="1"/>
</dbReference>
<dbReference type="Pfam" id="PF04055">
    <property type="entry name" value="Radical_SAM"/>
    <property type="match status" value="1"/>
</dbReference>
<dbReference type="Pfam" id="PF13186">
    <property type="entry name" value="SPASM"/>
    <property type="match status" value="1"/>
</dbReference>
<dbReference type="PIRSF" id="PIRSF037420">
    <property type="entry name" value="PQQ_syn_pqqE"/>
    <property type="match status" value="1"/>
</dbReference>
<dbReference type="SFLD" id="SFLDF00542">
    <property type="entry name" value="alternative_heme_biosynthesis"/>
    <property type="match status" value="1"/>
</dbReference>
<dbReference type="SFLD" id="SFLDG01387">
    <property type="entry name" value="BtrN-like_SPASM_domain_contain"/>
    <property type="match status" value="1"/>
</dbReference>
<dbReference type="SFLD" id="SFLDG01072">
    <property type="entry name" value="dehydrogenase_like"/>
    <property type="match status" value="1"/>
</dbReference>
<dbReference type="SMART" id="SM00729">
    <property type="entry name" value="Elp3"/>
    <property type="match status" value="1"/>
</dbReference>
<dbReference type="SUPFAM" id="SSF102114">
    <property type="entry name" value="Radical SAM enzymes"/>
    <property type="match status" value="1"/>
</dbReference>
<dbReference type="PROSITE" id="PS51918">
    <property type="entry name" value="RADICAL_SAM"/>
    <property type="match status" value="1"/>
</dbReference>
<name>AHBD_NITV2</name>
<evidence type="ECO:0000255" key="1">
    <source>
        <dbReference type="PROSITE-ProRule" id="PRU01266"/>
    </source>
</evidence>
<evidence type="ECO:0000269" key="2">
    <source>
    </source>
</evidence>
<evidence type="ECO:0000303" key="3">
    <source>
    </source>
</evidence>
<evidence type="ECO:0000305" key="4"/>
<evidence type="ECO:0000312" key="5">
    <source>
        <dbReference type="EMBL" id="AAS95335.1"/>
    </source>
</evidence>
<accession>Q72DS4</accession>
<sequence>MGAHPTAHGPRTLEDGSPTCKLIAWEVTRSCNLACKHCRAEAHMEPYPGEFSTDEAKALIDTFPDVGNPIIIFTGGDPMMRGDVYELIAYATDKGLRCVMSPNGTLITPEHAQRMKASGVQRCSISIDGPDAASHDAFRGVPGAFEQSMRGIGYLRDAGIEFQINTTVTRDNLHSFKDIFKLCERIGAVAWHIFLLVPTGRAAGLSDQVISAAEYEEVLNWFYDFRKTTSMHLKATCAPHYYRIMRQRAKEEGVSVTPDNFGMDAMTRGCLGGTGFCFISHTGQVQPCGYLELDCGNVRNTPFPEIWRKSEHFRQFRTQEEYTGKCGPCEYHKVCGGCRARAYNMSGDHMAEEPLCSYKPRRMTPCR</sequence>
<comment type="function">
    <text evidence="2">Involved in siroheme-dependent heme b biosynthesis. Catalyzes the conversion of Fe-coproporphyrin III into heme by the oxidative decarboxylation of two propionate side chains.</text>
</comment>
<comment type="catalytic activity">
    <reaction evidence="2">
        <text>Fe-coproporphyrin III + 2 S-adenosyl-L-methionine = heme b + 2 5'-deoxyadenosine + 2 L-methionine + 2 CO2</text>
        <dbReference type="Rhea" id="RHEA:56520"/>
        <dbReference type="ChEBI" id="CHEBI:16526"/>
        <dbReference type="ChEBI" id="CHEBI:17319"/>
        <dbReference type="ChEBI" id="CHEBI:57844"/>
        <dbReference type="ChEBI" id="CHEBI:59789"/>
        <dbReference type="ChEBI" id="CHEBI:60344"/>
        <dbReference type="ChEBI" id="CHEBI:68438"/>
        <dbReference type="EC" id="1.3.98.6"/>
    </reaction>
</comment>
<comment type="cofactor">
    <cofactor evidence="1">
        <name>[4Fe-4S] cluster</name>
        <dbReference type="ChEBI" id="CHEBI:49883"/>
    </cofactor>
</comment>
<comment type="pathway">
    <text evidence="2">Porphyrin-containing compound metabolism; protoheme biosynthesis.</text>
</comment>
<comment type="similarity">
    <text evidence="4">Belongs to the radical SAM superfamily.</text>
</comment>
<feature type="chain" id="PRO_0000450512" description="AdoMet-dependent heme synthase">
    <location>
        <begin position="1"/>
        <end position="367"/>
    </location>
</feature>
<feature type="domain" description="Radical SAM core" evidence="1">
    <location>
        <begin position="15"/>
        <end position="238"/>
    </location>
</feature>
<feature type="binding site" evidence="1">
    <location>
        <position position="31"/>
    </location>
    <ligand>
        <name>[4Fe-4S] cluster</name>
        <dbReference type="ChEBI" id="CHEBI:49883"/>
        <note>4Fe-4S-S-AdoMet</note>
    </ligand>
</feature>
<feature type="binding site" evidence="1">
    <location>
        <position position="35"/>
    </location>
    <ligand>
        <name>[4Fe-4S] cluster</name>
        <dbReference type="ChEBI" id="CHEBI:49883"/>
        <note>4Fe-4S-S-AdoMet</note>
    </ligand>
</feature>
<feature type="binding site" evidence="1">
    <location>
        <position position="38"/>
    </location>
    <ligand>
        <name>[4Fe-4S] cluster</name>
        <dbReference type="ChEBI" id="CHEBI:49883"/>
        <note>4Fe-4S-S-AdoMet</note>
    </ligand>
</feature>
<gene>
    <name evidence="3" type="primary">ahbD</name>
    <name evidence="5" type="ordered locus">DVU_0855</name>
</gene>
<protein>
    <recommendedName>
        <fullName evidence="4">AdoMet-dependent heme synthase</fullName>
        <ecNumber evidence="2">1.3.98.6</ecNumber>
    </recommendedName>
</protein>
<organism>
    <name type="scientific">Nitratidesulfovibrio vulgaris (strain ATCC 29579 / DSM 644 / CCUG 34227 / NCIMB 8303 / VKM B-1760 / Hildenborough)</name>
    <name type="common">Desulfovibrio vulgaris</name>
    <dbReference type="NCBI Taxonomy" id="882"/>
    <lineage>
        <taxon>Bacteria</taxon>
        <taxon>Pseudomonadati</taxon>
        <taxon>Thermodesulfobacteriota</taxon>
        <taxon>Desulfovibrionia</taxon>
        <taxon>Desulfovibrionales</taxon>
        <taxon>Desulfovibrionaceae</taxon>
        <taxon>Nitratidesulfovibrio</taxon>
    </lineage>
</organism>
<keyword id="KW-0004">4Fe-4S</keyword>
<keyword id="KW-0350">Heme biosynthesis</keyword>
<keyword id="KW-0408">Iron</keyword>
<keyword id="KW-0411">Iron-sulfur</keyword>
<keyword id="KW-0479">Metal-binding</keyword>
<keyword id="KW-0560">Oxidoreductase</keyword>
<keyword id="KW-1185">Reference proteome</keyword>
<keyword id="KW-0949">S-adenosyl-L-methionine</keyword>